<protein>
    <recommendedName>
        <fullName evidence="1">Fatty acid metabolism regulator protein</fullName>
    </recommendedName>
</protein>
<gene>
    <name evidence="1" type="primary">fadR</name>
    <name type="ordered locus">KPN78578_22760</name>
    <name type="ORF">KPN_02311</name>
</gene>
<organism>
    <name type="scientific">Klebsiella pneumoniae subsp. pneumoniae (strain ATCC 700721 / MGH 78578)</name>
    <dbReference type="NCBI Taxonomy" id="272620"/>
    <lineage>
        <taxon>Bacteria</taxon>
        <taxon>Pseudomonadati</taxon>
        <taxon>Pseudomonadota</taxon>
        <taxon>Gammaproteobacteria</taxon>
        <taxon>Enterobacterales</taxon>
        <taxon>Enterobacteriaceae</taxon>
        <taxon>Klebsiella/Raoultella group</taxon>
        <taxon>Klebsiella</taxon>
        <taxon>Klebsiella pneumoniae complex</taxon>
    </lineage>
</organism>
<sequence length="239" mass="27089">MVIKAQSPAGFAEEYIIESIWNNRFPPGSILPAERELSELIGVTRTTLREVLQRLARDGWLTIQHGKPTKVNNFWETSGLNILETLARLDHDSVPQLIDNLLSVRTNISTIFIRTAFRQHPDKALAVLDSAREVEDHADAFAELDYNIFRGLAFASGNPIYGLILNGMKGLYTRIGRHYFSSPEARSLALGFYHQLAKVCEAGLHDQVYELVRRYGHDSGEIWHRMQKSLPGDLAMNMR</sequence>
<comment type="function">
    <text evidence="1">Multifunctional regulator of fatty acid metabolism.</text>
</comment>
<comment type="subunit">
    <text evidence="1">Homodimer.</text>
</comment>
<comment type="subcellular location">
    <subcellularLocation>
        <location evidence="1">Cytoplasm</location>
    </subcellularLocation>
</comment>
<keyword id="KW-0010">Activator</keyword>
<keyword id="KW-0963">Cytoplasm</keyword>
<keyword id="KW-0238">DNA-binding</keyword>
<keyword id="KW-0276">Fatty acid metabolism</keyword>
<keyword id="KW-0443">Lipid metabolism</keyword>
<keyword id="KW-0678">Repressor</keyword>
<keyword id="KW-0804">Transcription</keyword>
<keyword id="KW-0805">Transcription regulation</keyword>
<reference key="1">
    <citation type="submission" date="2006-09" db="EMBL/GenBank/DDBJ databases">
        <authorList>
            <consortium name="The Klebsiella pneumonia Genome Sequencing Project"/>
            <person name="McClelland M."/>
            <person name="Sanderson E.K."/>
            <person name="Spieth J."/>
            <person name="Clifton W.S."/>
            <person name="Latreille P."/>
            <person name="Sabo A."/>
            <person name="Pepin K."/>
            <person name="Bhonagiri V."/>
            <person name="Porwollik S."/>
            <person name="Ali J."/>
            <person name="Wilson R.K."/>
        </authorList>
    </citation>
    <scope>NUCLEOTIDE SEQUENCE [LARGE SCALE GENOMIC DNA]</scope>
    <source>
        <strain>ATCC 700721 / MGH 78578</strain>
    </source>
</reference>
<proteinExistence type="inferred from homology"/>
<evidence type="ECO:0000255" key="1">
    <source>
        <dbReference type="HAMAP-Rule" id="MF_00696"/>
    </source>
</evidence>
<accession>A6TAW6</accession>
<feature type="chain" id="PRO_1000045463" description="Fatty acid metabolism regulator protein">
    <location>
        <begin position="1"/>
        <end position="239"/>
    </location>
</feature>
<feature type="domain" description="HTH gntR-type" evidence="1">
    <location>
        <begin position="6"/>
        <end position="74"/>
    </location>
</feature>
<feature type="DNA-binding region" description="H-T-H motif" evidence="1">
    <location>
        <begin position="34"/>
        <end position="53"/>
    </location>
</feature>
<dbReference type="EMBL" id="CP000647">
    <property type="protein sequence ID" value="ABR77737.1"/>
    <property type="molecule type" value="Genomic_DNA"/>
</dbReference>
<dbReference type="RefSeq" id="WP_002910890.1">
    <property type="nucleotide sequence ID" value="NC_009648.1"/>
</dbReference>
<dbReference type="SMR" id="A6TAW6"/>
<dbReference type="STRING" id="272620.KPN_02311"/>
<dbReference type="jPOST" id="A6TAW6"/>
<dbReference type="PaxDb" id="272620-KPN_02311"/>
<dbReference type="EnsemblBacteria" id="ABR77737">
    <property type="protein sequence ID" value="ABR77737"/>
    <property type="gene ID" value="KPN_02311"/>
</dbReference>
<dbReference type="KEGG" id="kpn:KPN_02311"/>
<dbReference type="HOGENOM" id="CLU_017584_9_4_6"/>
<dbReference type="PHI-base" id="PHI:11407"/>
<dbReference type="Proteomes" id="UP000000265">
    <property type="component" value="Chromosome"/>
</dbReference>
<dbReference type="GO" id="GO:0005737">
    <property type="term" value="C:cytoplasm"/>
    <property type="evidence" value="ECO:0007669"/>
    <property type="project" value="UniProtKB-SubCell"/>
</dbReference>
<dbReference type="GO" id="GO:0003677">
    <property type="term" value="F:DNA binding"/>
    <property type="evidence" value="ECO:0007669"/>
    <property type="project" value="UniProtKB-KW"/>
</dbReference>
<dbReference type="GO" id="GO:0003700">
    <property type="term" value="F:DNA-binding transcription factor activity"/>
    <property type="evidence" value="ECO:0007669"/>
    <property type="project" value="UniProtKB-UniRule"/>
</dbReference>
<dbReference type="GO" id="GO:0000062">
    <property type="term" value="F:fatty-acyl-CoA binding"/>
    <property type="evidence" value="ECO:0007669"/>
    <property type="project" value="InterPro"/>
</dbReference>
<dbReference type="GO" id="GO:0006631">
    <property type="term" value="P:fatty acid metabolic process"/>
    <property type="evidence" value="ECO:0007669"/>
    <property type="project" value="UniProtKB-KW"/>
</dbReference>
<dbReference type="GO" id="GO:0019217">
    <property type="term" value="P:regulation of fatty acid metabolic process"/>
    <property type="evidence" value="ECO:0007669"/>
    <property type="project" value="UniProtKB-UniRule"/>
</dbReference>
<dbReference type="CDD" id="cd07377">
    <property type="entry name" value="WHTH_GntR"/>
    <property type="match status" value="1"/>
</dbReference>
<dbReference type="FunFam" id="1.10.10.10:FF:000036">
    <property type="entry name" value="Fatty acid metabolism regulator protein"/>
    <property type="match status" value="1"/>
</dbReference>
<dbReference type="FunFam" id="1.20.120.530:FF:000003">
    <property type="entry name" value="Fatty acid metabolism regulator protein"/>
    <property type="match status" value="1"/>
</dbReference>
<dbReference type="Gene3D" id="1.20.120.530">
    <property type="entry name" value="GntR ligand-binding domain-like"/>
    <property type="match status" value="1"/>
</dbReference>
<dbReference type="Gene3D" id="1.10.10.10">
    <property type="entry name" value="Winged helix-like DNA-binding domain superfamily/Winged helix DNA-binding domain"/>
    <property type="match status" value="1"/>
</dbReference>
<dbReference type="HAMAP" id="MF_00696">
    <property type="entry name" value="HTH_FadR"/>
    <property type="match status" value="1"/>
</dbReference>
<dbReference type="InterPro" id="IPR014178">
    <property type="entry name" value="FA-response_TF_FadR"/>
</dbReference>
<dbReference type="InterPro" id="IPR028374">
    <property type="entry name" value="FadR_C"/>
</dbReference>
<dbReference type="InterPro" id="IPR008920">
    <property type="entry name" value="TF_FadR/GntR_C"/>
</dbReference>
<dbReference type="InterPro" id="IPR000524">
    <property type="entry name" value="Tscrpt_reg_HTH_GntR"/>
</dbReference>
<dbReference type="InterPro" id="IPR036388">
    <property type="entry name" value="WH-like_DNA-bd_sf"/>
</dbReference>
<dbReference type="InterPro" id="IPR036390">
    <property type="entry name" value="WH_DNA-bd_sf"/>
</dbReference>
<dbReference type="NCBIfam" id="TIGR02812">
    <property type="entry name" value="fadR_gamma"/>
    <property type="match status" value="1"/>
</dbReference>
<dbReference type="NCBIfam" id="NF003444">
    <property type="entry name" value="PRK04984.1"/>
    <property type="match status" value="1"/>
</dbReference>
<dbReference type="PANTHER" id="PTHR43537:SF52">
    <property type="entry name" value="FATTY ACID METABOLISM REGULATOR PROTEIN"/>
    <property type="match status" value="1"/>
</dbReference>
<dbReference type="PANTHER" id="PTHR43537">
    <property type="entry name" value="TRANSCRIPTIONAL REGULATOR, GNTR FAMILY"/>
    <property type="match status" value="1"/>
</dbReference>
<dbReference type="Pfam" id="PF07840">
    <property type="entry name" value="FadR_C"/>
    <property type="match status" value="1"/>
</dbReference>
<dbReference type="Pfam" id="PF00392">
    <property type="entry name" value="GntR"/>
    <property type="match status" value="1"/>
</dbReference>
<dbReference type="PRINTS" id="PR00035">
    <property type="entry name" value="HTHGNTR"/>
</dbReference>
<dbReference type="SMART" id="SM00345">
    <property type="entry name" value="HTH_GNTR"/>
    <property type="match status" value="1"/>
</dbReference>
<dbReference type="SUPFAM" id="SSF48008">
    <property type="entry name" value="GntR ligand-binding domain-like"/>
    <property type="match status" value="1"/>
</dbReference>
<dbReference type="SUPFAM" id="SSF46785">
    <property type="entry name" value="Winged helix' DNA-binding domain"/>
    <property type="match status" value="1"/>
</dbReference>
<dbReference type="PROSITE" id="PS50949">
    <property type="entry name" value="HTH_GNTR"/>
    <property type="match status" value="1"/>
</dbReference>
<name>FADR_KLEP7</name>